<comment type="function">
    <text evidence="1">The zeta chain is an alpha-type chain of mammalian embryonic hemoglobin.</text>
</comment>
<comment type="subunit">
    <text evidence="1">Heterotetramer of two zeta chains and beta-type chains.</text>
</comment>
<comment type="similarity">
    <text evidence="3">Belongs to the globin family.</text>
</comment>
<organism>
    <name type="scientific">Mus musculus</name>
    <name type="common">Mouse</name>
    <dbReference type="NCBI Taxonomy" id="10090"/>
    <lineage>
        <taxon>Eukaryota</taxon>
        <taxon>Metazoa</taxon>
        <taxon>Chordata</taxon>
        <taxon>Craniata</taxon>
        <taxon>Vertebrata</taxon>
        <taxon>Euteleostomi</taxon>
        <taxon>Mammalia</taxon>
        <taxon>Eutheria</taxon>
        <taxon>Euarchontoglires</taxon>
        <taxon>Glires</taxon>
        <taxon>Rodentia</taxon>
        <taxon>Myomorpha</taxon>
        <taxon>Muroidea</taxon>
        <taxon>Muridae</taxon>
        <taxon>Murinae</taxon>
        <taxon>Mus</taxon>
        <taxon>Mus</taxon>
    </lineage>
</organism>
<name>HBAZ_MOUSE</name>
<reference key="1">
    <citation type="journal article" date="1985" name="Mol. Cell. Biol.">
        <title>Characterization, expression, and evolution of the mouse embryonic zeta-globin gene.</title>
        <authorList>
            <person name="Leder A."/>
            <person name="Weir L."/>
            <person name="Leder P."/>
        </authorList>
    </citation>
    <scope>NUCLEOTIDE SEQUENCE [GENOMIC DNA]</scope>
</reference>
<reference key="2">
    <citation type="journal article" date="1987" name="Development">
        <title>A molecular analysis of mouse development from 8 to 10 days post coitum detects changes only in embryonic globin expression.</title>
        <authorList>
            <person name="Wilkinson D.G."/>
            <person name="Bailes J.A."/>
            <person name="Champion J.E."/>
            <person name="McMahon A.P."/>
        </authorList>
    </citation>
    <scope>NUCLEOTIDE SEQUENCE [MRNA]</scope>
</reference>
<reference key="3">
    <citation type="journal article" date="2005" name="Science">
        <title>The transcriptional landscape of the mammalian genome.</title>
        <authorList>
            <person name="Carninci P."/>
            <person name="Kasukawa T."/>
            <person name="Katayama S."/>
            <person name="Gough J."/>
            <person name="Frith M.C."/>
            <person name="Maeda N."/>
            <person name="Oyama R."/>
            <person name="Ravasi T."/>
            <person name="Lenhard B."/>
            <person name="Wells C."/>
            <person name="Kodzius R."/>
            <person name="Shimokawa K."/>
            <person name="Bajic V.B."/>
            <person name="Brenner S.E."/>
            <person name="Batalov S."/>
            <person name="Forrest A.R."/>
            <person name="Zavolan M."/>
            <person name="Davis M.J."/>
            <person name="Wilming L.G."/>
            <person name="Aidinis V."/>
            <person name="Allen J.E."/>
            <person name="Ambesi-Impiombato A."/>
            <person name="Apweiler R."/>
            <person name="Aturaliya R.N."/>
            <person name="Bailey T.L."/>
            <person name="Bansal M."/>
            <person name="Baxter L."/>
            <person name="Beisel K.W."/>
            <person name="Bersano T."/>
            <person name="Bono H."/>
            <person name="Chalk A.M."/>
            <person name="Chiu K.P."/>
            <person name="Choudhary V."/>
            <person name="Christoffels A."/>
            <person name="Clutterbuck D.R."/>
            <person name="Crowe M.L."/>
            <person name="Dalla E."/>
            <person name="Dalrymple B.P."/>
            <person name="de Bono B."/>
            <person name="Della Gatta G."/>
            <person name="di Bernardo D."/>
            <person name="Down T."/>
            <person name="Engstrom P."/>
            <person name="Fagiolini M."/>
            <person name="Faulkner G."/>
            <person name="Fletcher C.F."/>
            <person name="Fukushima T."/>
            <person name="Furuno M."/>
            <person name="Futaki S."/>
            <person name="Gariboldi M."/>
            <person name="Georgii-Hemming P."/>
            <person name="Gingeras T.R."/>
            <person name="Gojobori T."/>
            <person name="Green R.E."/>
            <person name="Gustincich S."/>
            <person name="Harbers M."/>
            <person name="Hayashi Y."/>
            <person name="Hensch T.K."/>
            <person name="Hirokawa N."/>
            <person name="Hill D."/>
            <person name="Huminiecki L."/>
            <person name="Iacono M."/>
            <person name="Ikeo K."/>
            <person name="Iwama A."/>
            <person name="Ishikawa T."/>
            <person name="Jakt M."/>
            <person name="Kanapin A."/>
            <person name="Katoh M."/>
            <person name="Kawasawa Y."/>
            <person name="Kelso J."/>
            <person name="Kitamura H."/>
            <person name="Kitano H."/>
            <person name="Kollias G."/>
            <person name="Krishnan S.P."/>
            <person name="Kruger A."/>
            <person name="Kummerfeld S.K."/>
            <person name="Kurochkin I.V."/>
            <person name="Lareau L.F."/>
            <person name="Lazarevic D."/>
            <person name="Lipovich L."/>
            <person name="Liu J."/>
            <person name="Liuni S."/>
            <person name="McWilliam S."/>
            <person name="Madan Babu M."/>
            <person name="Madera M."/>
            <person name="Marchionni L."/>
            <person name="Matsuda H."/>
            <person name="Matsuzawa S."/>
            <person name="Miki H."/>
            <person name="Mignone F."/>
            <person name="Miyake S."/>
            <person name="Morris K."/>
            <person name="Mottagui-Tabar S."/>
            <person name="Mulder N."/>
            <person name="Nakano N."/>
            <person name="Nakauchi H."/>
            <person name="Ng P."/>
            <person name="Nilsson R."/>
            <person name="Nishiguchi S."/>
            <person name="Nishikawa S."/>
            <person name="Nori F."/>
            <person name="Ohara O."/>
            <person name="Okazaki Y."/>
            <person name="Orlando V."/>
            <person name="Pang K.C."/>
            <person name="Pavan W.J."/>
            <person name="Pavesi G."/>
            <person name="Pesole G."/>
            <person name="Petrovsky N."/>
            <person name="Piazza S."/>
            <person name="Reed J."/>
            <person name="Reid J.F."/>
            <person name="Ring B.Z."/>
            <person name="Ringwald M."/>
            <person name="Rost B."/>
            <person name="Ruan Y."/>
            <person name="Salzberg S.L."/>
            <person name="Sandelin A."/>
            <person name="Schneider C."/>
            <person name="Schoenbach C."/>
            <person name="Sekiguchi K."/>
            <person name="Semple C.A."/>
            <person name="Seno S."/>
            <person name="Sessa L."/>
            <person name="Sheng Y."/>
            <person name="Shibata Y."/>
            <person name="Shimada H."/>
            <person name="Shimada K."/>
            <person name="Silva D."/>
            <person name="Sinclair B."/>
            <person name="Sperling S."/>
            <person name="Stupka E."/>
            <person name="Sugiura K."/>
            <person name="Sultana R."/>
            <person name="Takenaka Y."/>
            <person name="Taki K."/>
            <person name="Tammoja K."/>
            <person name="Tan S.L."/>
            <person name="Tang S."/>
            <person name="Taylor M.S."/>
            <person name="Tegner J."/>
            <person name="Teichmann S.A."/>
            <person name="Ueda H.R."/>
            <person name="van Nimwegen E."/>
            <person name="Verardo R."/>
            <person name="Wei C.L."/>
            <person name="Yagi K."/>
            <person name="Yamanishi H."/>
            <person name="Zabarovsky E."/>
            <person name="Zhu S."/>
            <person name="Zimmer A."/>
            <person name="Hide W."/>
            <person name="Bult C."/>
            <person name="Grimmond S.M."/>
            <person name="Teasdale R.D."/>
            <person name="Liu E.T."/>
            <person name="Brusic V."/>
            <person name="Quackenbush J."/>
            <person name="Wahlestedt C."/>
            <person name="Mattick J.S."/>
            <person name="Hume D.A."/>
            <person name="Kai C."/>
            <person name="Sasaki D."/>
            <person name="Tomaru Y."/>
            <person name="Fukuda S."/>
            <person name="Kanamori-Katayama M."/>
            <person name="Suzuki M."/>
            <person name="Aoki J."/>
            <person name="Arakawa T."/>
            <person name="Iida J."/>
            <person name="Imamura K."/>
            <person name="Itoh M."/>
            <person name="Kato T."/>
            <person name="Kawaji H."/>
            <person name="Kawagashira N."/>
            <person name="Kawashima T."/>
            <person name="Kojima M."/>
            <person name="Kondo S."/>
            <person name="Konno H."/>
            <person name="Nakano K."/>
            <person name="Ninomiya N."/>
            <person name="Nishio T."/>
            <person name="Okada M."/>
            <person name="Plessy C."/>
            <person name="Shibata K."/>
            <person name="Shiraki T."/>
            <person name="Suzuki S."/>
            <person name="Tagami M."/>
            <person name="Waki K."/>
            <person name="Watahiki A."/>
            <person name="Okamura-Oho Y."/>
            <person name="Suzuki H."/>
            <person name="Kawai J."/>
            <person name="Hayashizaki Y."/>
        </authorList>
    </citation>
    <scope>NUCLEOTIDE SEQUENCE [LARGE SCALE MRNA]</scope>
    <source>
        <strain>C57BL/6J</strain>
    </source>
</reference>
<reference key="4">
    <citation type="journal article" date="2004" name="Genome Res.">
        <title>The status, quality, and expansion of the NIH full-length cDNA project: the Mammalian Gene Collection (MGC).</title>
        <authorList>
            <consortium name="The MGC Project Team"/>
        </authorList>
    </citation>
    <scope>NUCLEOTIDE SEQUENCE [LARGE SCALE MRNA]</scope>
    <source>
        <strain>C57BL/6J</strain>
        <tissue>Brain</tissue>
    </source>
</reference>
<reference key="5">
    <citation type="journal article" date="1984" name="Gene">
        <title>Molecular cloning and sequence analysis of a cDNA coding for the mouse alpha-like embryonic globin chain x.</title>
        <authorList>
            <person name="Farace M.-G."/>
            <person name="Hill A."/>
            <person name="Tripodi M."/>
            <person name="Padgett R.W."/>
            <person name="Raschella G."/>
            <person name="Gambari R."/>
            <person name="Fantoni A."/>
            <person name="Hutchison C.A. III"/>
            <person name="Edgell M.H."/>
        </authorList>
    </citation>
    <scope>NUCLEOTIDE SEQUENCE [MRNA] OF 44-142</scope>
    <source>
        <tissue>Erythroid cell</tissue>
    </source>
</reference>
<proteinExistence type="evidence at transcript level"/>
<evidence type="ECO:0000250" key="1"/>
<evidence type="ECO:0000250" key="2">
    <source>
        <dbReference type="UniProtKB" id="P02008"/>
    </source>
</evidence>
<evidence type="ECO:0000255" key="3">
    <source>
        <dbReference type="PROSITE-ProRule" id="PRU00238"/>
    </source>
</evidence>
<evidence type="ECO:0000305" key="4"/>
<sequence length="142" mass="16235">MSLMKNERAIIMSMWEKMAAQAEPIGTETLERLFCSYPQTKTYFPHFDLHHGSQQLRAHGFKIMTAVGDAVKSIDNLSSALTKLSELHAYILRVDPVNFKLLSHCLLVTMAARFPADFTPEVHEAWDKFMSILSSILTEKYR</sequence>
<protein>
    <recommendedName>
        <fullName>Hemoglobin subunit zeta</fullName>
    </recommendedName>
    <alternativeName>
        <fullName>Alpha-like embryonic globin chain x</fullName>
    </alternativeName>
    <alternativeName>
        <fullName>Hemoglobin zeta chain</fullName>
    </alternativeName>
    <alternativeName>
        <fullName>Zeta-globin</fullName>
    </alternativeName>
</protein>
<gene>
    <name type="primary">Hbz</name>
    <name type="synonym">Hba-x</name>
    <name type="synonym">Hbz1</name>
</gene>
<keyword id="KW-0007">Acetylation</keyword>
<keyword id="KW-0349">Heme</keyword>
<keyword id="KW-0408">Iron</keyword>
<keyword id="KW-0479">Metal-binding</keyword>
<keyword id="KW-0561">Oxygen transport</keyword>
<keyword id="KW-0597">Phosphoprotein</keyword>
<keyword id="KW-1185">Reference proteome</keyword>
<keyword id="KW-0813">Transport</keyword>
<accession>P06467</accession>
<accession>Q61654</accession>
<feature type="initiator methionine" description="Removed" evidence="2">
    <location>
        <position position="1"/>
    </location>
</feature>
<feature type="chain" id="PRO_0000052852" description="Hemoglobin subunit zeta">
    <location>
        <begin position="2"/>
        <end position="142"/>
    </location>
</feature>
<feature type="domain" description="Globin" evidence="3">
    <location>
        <begin position="2"/>
        <end position="142"/>
    </location>
</feature>
<feature type="binding site" description="distal binding residue">
    <location>
        <position position="59"/>
    </location>
    <ligand>
        <name>heme b</name>
        <dbReference type="ChEBI" id="CHEBI:60344"/>
    </ligand>
    <ligandPart>
        <name>Fe</name>
        <dbReference type="ChEBI" id="CHEBI:18248"/>
    </ligandPart>
</feature>
<feature type="binding site" description="proximal binding residue">
    <location>
        <position position="88"/>
    </location>
    <ligand>
        <name>heme b</name>
        <dbReference type="ChEBI" id="CHEBI:60344"/>
    </ligand>
    <ligandPart>
        <name>Fe</name>
        <dbReference type="ChEBI" id="CHEBI:18248"/>
    </ligandPart>
</feature>
<feature type="modified residue" description="N-acetylserine" evidence="2">
    <location>
        <position position="2"/>
    </location>
</feature>
<feature type="modified residue" description="Phosphothreonine" evidence="2">
    <location>
        <position position="29"/>
    </location>
</feature>
<feature type="modified residue" description="Phosphoserine" evidence="2">
    <location>
        <position position="53"/>
    </location>
</feature>
<feature type="modified residue" description="Phosphoserine" evidence="2">
    <location>
        <position position="73"/>
    </location>
</feature>
<feature type="sequence conflict" description="In Ref. 5; AAA37794." evidence="4" ref="5">
    <original>F</original>
    <variation>L</variation>
    <location>
        <position position="44"/>
    </location>
</feature>
<feature type="sequence conflict" description="In Ref. 2; AAA37702." evidence="4" ref="2">
    <original>V</original>
    <variation>L</variation>
    <location>
        <position position="108"/>
    </location>
</feature>
<feature type="sequence conflict" description="In Ref. 2; AAA37702." evidence="4" ref="2">
    <original>F</original>
    <variation>N</variation>
    <location>
        <position position="118"/>
    </location>
</feature>
<dbReference type="EMBL" id="X62302">
    <property type="protein sequence ID" value="CAA44187.1"/>
    <property type="molecule type" value="Genomic_DNA"/>
</dbReference>
<dbReference type="EMBL" id="M26898">
    <property type="protein sequence ID" value="AAA37702.1"/>
    <property type="molecule type" value="mRNA"/>
</dbReference>
<dbReference type="EMBL" id="AK077590">
    <property type="protein sequence ID" value="BAC36881.1"/>
    <property type="molecule type" value="mRNA"/>
</dbReference>
<dbReference type="EMBL" id="BC051988">
    <property type="protein sequence ID" value="AAH51988.1"/>
    <property type="molecule type" value="mRNA"/>
</dbReference>
<dbReference type="EMBL" id="M13125">
    <property type="protein sequence ID" value="AAA37794.1"/>
    <property type="molecule type" value="mRNA"/>
</dbReference>
<dbReference type="CCDS" id="CCDS24522.1"/>
<dbReference type="PIR" id="A23283">
    <property type="entry name" value="A23283"/>
</dbReference>
<dbReference type="RefSeq" id="NP_034535.1">
    <property type="nucleotide sequence ID" value="NM_010405.4"/>
</dbReference>
<dbReference type="SMR" id="P06467"/>
<dbReference type="BioGRID" id="200216">
    <property type="interactions" value="4"/>
</dbReference>
<dbReference type="ComplexPortal" id="CPX-2938">
    <property type="entry name" value="Early embryonic hemoglobin complex"/>
</dbReference>
<dbReference type="ComplexPortal" id="CPX-2939">
    <property type="entry name" value="Embryonic hemoglobin complex"/>
</dbReference>
<dbReference type="FunCoup" id="P06467">
    <property type="interactions" value="25"/>
</dbReference>
<dbReference type="STRING" id="10090.ENSMUSP00000020531"/>
<dbReference type="iPTMnet" id="P06467"/>
<dbReference type="PhosphoSitePlus" id="P06467"/>
<dbReference type="SwissPalm" id="P06467"/>
<dbReference type="CPTAC" id="non-CPTAC-3819"/>
<dbReference type="jPOST" id="P06467"/>
<dbReference type="PaxDb" id="10090-ENSMUSP00000020531"/>
<dbReference type="PeptideAtlas" id="P06467"/>
<dbReference type="ProteomicsDB" id="270895"/>
<dbReference type="Antibodypedia" id="8877">
    <property type="antibodies" value="276 antibodies from 30 providers"/>
</dbReference>
<dbReference type="DNASU" id="15126"/>
<dbReference type="Ensembl" id="ENSMUST00000020531.9">
    <property type="protein sequence ID" value="ENSMUSP00000020531.3"/>
    <property type="gene ID" value="ENSMUSG00000055609.9"/>
</dbReference>
<dbReference type="GeneID" id="15126"/>
<dbReference type="KEGG" id="mmu:15126"/>
<dbReference type="UCSC" id="uc007ijj.2">
    <property type="organism name" value="mouse"/>
</dbReference>
<dbReference type="AGR" id="MGI:96019"/>
<dbReference type="CTD" id="15126"/>
<dbReference type="MGI" id="MGI:96019">
    <property type="gene designation" value="Hba-x"/>
</dbReference>
<dbReference type="VEuPathDB" id="HostDB:ENSMUSG00000055609"/>
<dbReference type="eggNOG" id="KOG3378">
    <property type="taxonomic scope" value="Eukaryota"/>
</dbReference>
<dbReference type="GeneTree" id="ENSGT00940000158623"/>
<dbReference type="HOGENOM" id="CLU_003827_10_2_1"/>
<dbReference type="InParanoid" id="P06467"/>
<dbReference type="OMA" id="DILCENC"/>
<dbReference type="OrthoDB" id="8751793at2759"/>
<dbReference type="PhylomeDB" id="P06467"/>
<dbReference type="TreeFam" id="TF332328"/>
<dbReference type="BioGRID-ORCS" id="15126">
    <property type="hits" value="2 hits in 78 CRISPR screens"/>
</dbReference>
<dbReference type="ChiTaRS" id="Hba-x">
    <property type="organism name" value="mouse"/>
</dbReference>
<dbReference type="PRO" id="PR:P06467"/>
<dbReference type="Proteomes" id="UP000000589">
    <property type="component" value="Chromosome 11"/>
</dbReference>
<dbReference type="RNAct" id="P06467">
    <property type="molecule type" value="protein"/>
</dbReference>
<dbReference type="Bgee" id="ENSMUSG00000055609">
    <property type="expression patterns" value="Expressed in yolk sac and 88 other cell types or tissues"/>
</dbReference>
<dbReference type="ExpressionAtlas" id="P06467">
    <property type="expression patterns" value="baseline and differential"/>
</dbReference>
<dbReference type="GO" id="GO:0005833">
    <property type="term" value="C:hemoglobin complex"/>
    <property type="evidence" value="ECO:0000303"/>
    <property type="project" value="ComplexPortal"/>
</dbReference>
<dbReference type="GO" id="GO:0020037">
    <property type="term" value="F:heme binding"/>
    <property type="evidence" value="ECO:0007669"/>
    <property type="project" value="InterPro"/>
</dbReference>
<dbReference type="GO" id="GO:0005506">
    <property type="term" value="F:iron ion binding"/>
    <property type="evidence" value="ECO:0007669"/>
    <property type="project" value="InterPro"/>
</dbReference>
<dbReference type="GO" id="GO:0019825">
    <property type="term" value="F:oxygen binding"/>
    <property type="evidence" value="ECO:0007669"/>
    <property type="project" value="InterPro"/>
</dbReference>
<dbReference type="GO" id="GO:0005344">
    <property type="term" value="F:oxygen carrier activity"/>
    <property type="evidence" value="ECO:0007669"/>
    <property type="project" value="UniProtKB-KW"/>
</dbReference>
<dbReference type="GO" id="GO:0015670">
    <property type="term" value="P:carbon dioxide transport"/>
    <property type="evidence" value="ECO:0000303"/>
    <property type="project" value="ComplexPortal"/>
</dbReference>
<dbReference type="GO" id="GO:0043249">
    <property type="term" value="P:erythrocyte maturation"/>
    <property type="evidence" value="ECO:0000315"/>
    <property type="project" value="MGI"/>
</dbReference>
<dbReference type="GO" id="GO:0000122">
    <property type="term" value="P:negative regulation of transcription by RNA polymerase II"/>
    <property type="evidence" value="ECO:0000315"/>
    <property type="project" value="MGI"/>
</dbReference>
<dbReference type="GO" id="GO:0015671">
    <property type="term" value="P:oxygen transport"/>
    <property type="evidence" value="ECO:0000303"/>
    <property type="project" value="ComplexPortal"/>
</dbReference>
<dbReference type="CDD" id="cd08927">
    <property type="entry name" value="Hb-alpha-like"/>
    <property type="match status" value="1"/>
</dbReference>
<dbReference type="FunFam" id="1.10.490.10:FF:000002">
    <property type="entry name" value="Hemoglobin subunit alpha"/>
    <property type="match status" value="1"/>
</dbReference>
<dbReference type="Gene3D" id="1.10.490.10">
    <property type="entry name" value="Globins"/>
    <property type="match status" value="1"/>
</dbReference>
<dbReference type="InterPro" id="IPR000971">
    <property type="entry name" value="Globin"/>
</dbReference>
<dbReference type="InterPro" id="IPR009050">
    <property type="entry name" value="Globin-like_sf"/>
</dbReference>
<dbReference type="InterPro" id="IPR012292">
    <property type="entry name" value="Globin/Proto"/>
</dbReference>
<dbReference type="InterPro" id="IPR002338">
    <property type="entry name" value="Hemoglobin_a-typ"/>
</dbReference>
<dbReference type="InterPro" id="IPR050056">
    <property type="entry name" value="Hemoglobin_oxygen_transport"/>
</dbReference>
<dbReference type="InterPro" id="IPR002340">
    <property type="entry name" value="Hemoglobin_zeta"/>
</dbReference>
<dbReference type="PANTHER" id="PTHR11442">
    <property type="entry name" value="HEMOGLOBIN FAMILY MEMBER"/>
    <property type="match status" value="1"/>
</dbReference>
<dbReference type="PANTHER" id="PTHR11442:SF41">
    <property type="entry name" value="HEMOGLOBIN SUBUNIT ZETA"/>
    <property type="match status" value="1"/>
</dbReference>
<dbReference type="Pfam" id="PF00042">
    <property type="entry name" value="Globin"/>
    <property type="match status" value="1"/>
</dbReference>
<dbReference type="PRINTS" id="PR00612">
    <property type="entry name" value="ALPHAHAEM"/>
</dbReference>
<dbReference type="PRINTS" id="PR00816">
    <property type="entry name" value="ZETAHAEM"/>
</dbReference>
<dbReference type="SUPFAM" id="SSF46458">
    <property type="entry name" value="Globin-like"/>
    <property type="match status" value="1"/>
</dbReference>
<dbReference type="PROSITE" id="PS01033">
    <property type="entry name" value="GLOBIN"/>
    <property type="match status" value="1"/>
</dbReference>